<feature type="chain" id="PRO_0000085601" description="Serine/threonine-protein kinase AFC2">
    <location>
        <begin position="1"/>
        <end position="427"/>
    </location>
</feature>
<feature type="domain" description="Protein kinase" evidence="1">
    <location>
        <begin position="98"/>
        <end position="423"/>
    </location>
</feature>
<feature type="active site" description="Proton acceptor" evidence="1 2">
    <location>
        <position position="223"/>
    </location>
</feature>
<feature type="binding site" evidence="1">
    <location>
        <begin position="104"/>
        <end position="112"/>
    </location>
    <ligand>
        <name>ATP</name>
        <dbReference type="ChEBI" id="CHEBI:30616"/>
    </ligand>
</feature>
<feature type="binding site" evidence="1">
    <location>
        <position position="127"/>
    </location>
    <ligand>
        <name>ATP</name>
        <dbReference type="ChEBI" id="CHEBI:30616"/>
    </ligand>
</feature>
<proteinExistence type="evidence at protein level"/>
<keyword id="KW-0025">Alternative splicing</keyword>
<keyword id="KW-0067">ATP-binding</keyword>
<keyword id="KW-0418">Kinase</keyword>
<keyword id="KW-0547">Nucleotide-binding</keyword>
<keyword id="KW-1185">Reference proteome</keyword>
<keyword id="KW-0723">Serine/threonine-protein kinase</keyword>
<keyword id="KW-0808">Transferase</keyword>
<dbReference type="EC" id="2.7.12.1"/>
<dbReference type="EMBL" id="U16177">
    <property type="protein sequence ID" value="AAA57118.1"/>
    <property type="molecule type" value="mRNA"/>
</dbReference>
<dbReference type="EMBL" id="D45353">
    <property type="protein sequence ID" value="BAA08214.1"/>
    <property type="molecule type" value="mRNA"/>
</dbReference>
<dbReference type="EMBL" id="AL035356">
    <property type="protein sequence ID" value="CAA22989.1"/>
    <property type="molecule type" value="Genomic_DNA"/>
</dbReference>
<dbReference type="EMBL" id="AL161562">
    <property type="protein sequence ID" value="CAB79384.1"/>
    <property type="molecule type" value="Genomic_DNA"/>
</dbReference>
<dbReference type="EMBL" id="CP002687">
    <property type="protein sequence ID" value="AEE84951.1"/>
    <property type="molecule type" value="Genomic_DNA"/>
</dbReference>
<dbReference type="PIR" id="T05560">
    <property type="entry name" value="T05560"/>
</dbReference>
<dbReference type="RefSeq" id="NP_194205.1">
    <molecule id="P51567-1"/>
    <property type="nucleotide sequence ID" value="NM_118607.3"/>
</dbReference>
<dbReference type="SMR" id="P51567"/>
<dbReference type="BioGRID" id="13865">
    <property type="interactions" value="3"/>
</dbReference>
<dbReference type="FunCoup" id="P51567">
    <property type="interactions" value="3791"/>
</dbReference>
<dbReference type="IntAct" id="P51567">
    <property type="interactions" value="3"/>
</dbReference>
<dbReference type="STRING" id="3702.P51567"/>
<dbReference type="iPTMnet" id="P51567"/>
<dbReference type="PaxDb" id="3702-AT4G24740.1"/>
<dbReference type="EnsemblPlants" id="AT4G24740.1">
    <molecule id="P51567-1"/>
    <property type="protein sequence ID" value="AT4G24740.1"/>
    <property type="gene ID" value="AT4G24740"/>
</dbReference>
<dbReference type="GeneID" id="828576"/>
<dbReference type="Gramene" id="AT4G24740.1">
    <molecule id="P51567-1"/>
    <property type="protein sequence ID" value="AT4G24740.1"/>
    <property type="gene ID" value="AT4G24740"/>
</dbReference>
<dbReference type="KEGG" id="ath:AT4G24740"/>
<dbReference type="Araport" id="AT4G24740"/>
<dbReference type="TAIR" id="AT4G24740">
    <property type="gene designation" value="FC2"/>
</dbReference>
<dbReference type="eggNOG" id="KOG0671">
    <property type="taxonomic scope" value="Eukaryota"/>
</dbReference>
<dbReference type="InParanoid" id="P51567"/>
<dbReference type="PhylomeDB" id="P51567"/>
<dbReference type="BRENDA" id="2.7.12.1">
    <property type="organism ID" value="399"/>
</dbReference>
<dbReference type="PRO" id="PR:P51567"/>
<dbReference type="Proteomes" id="UP000006548">
    <property type="component" value="Chromosome 4"/>
</dbReference>
<dbReference type="ExpressionAtlas" id="P51567">
    <property type="expression patterns" value="baseline and differential"/>
</dbReference>
<dbReference type="GO" id="GO:0005524">
    <property type="term" value="F:ATP binding"/>
    <property type="evidence" value="ECO:0007669"/>
    <property type="project" value="UniProtKB-KW"/>
</dbReference>
<dbReference type="GO" id="GO:0004672">
    <property type="term" value="F:protein kinase activity"/>
    <property type="evidence" value="ECO:0000314"/>
    <property type="project" value="TAIR"/>
</dbReference>
<dbReference type="GO" id="GO:0106310">
    <property type="term" value="F:protein serine kinase activity"/>
    <property type="evidence" value="ECO:0007669"/>
    <property type="project" value="RHEA"/>
</dbReference>
<dbReference type="GO" id="GO:0004674">
    <property type="term" value="F:protein serine/threonine kinase activity"/>
    <property type="evidence" value="ECO:0007005"/>
    <property type="project" value="TAIR"/>
</dbReference>
<dbReference type="GO" id="GO:0004712">
    <property type="term" value="F:protein serine/threonine/tyrosine kinase activity"/>
    <property type="evidence" value="ECO:0007669"/>
    <property type="project" value="UniProtKB-EC"/>
</dbReference>
<dbReference type="GO" id="GO:0004713">
    <property type="term" value="F:protein tyrosine kinase activity"/>
    <property type="evidence" value="ECO:0007669"/>
    <property type="project" value="RHEA"/>
</dbReference>
<dbReference type="GO" id="GO:0006397">
    <property type="term" value="P:mRNA processing"/>
    <property type="evidence" value="ECO:0000314"/>
    <property type="project" value="TAIR"/>
</dbReference>
<dbReference type="GO" id="GO:0046777">
    <property type="term" value="P:protein autophosphorylation"/>
    <property type="evidence" value="ECO:0007005"/>
    <property type="project" value="TAIR"/>
</dbReference>
<dbReference type="CDD" id="cd14134">
    <property type="entry name" value="PKc_CLK"/>
    <property type="match status" value="1"/>
</dbReference>
<dbReference type="FunFam" id="1.10.510.10:FF:000612">
    <property type="entry name" value="Serine/threonine-protein kinase AFC2"/>
    <property type="match status" value="1"/>
</dbReference>
<dbReference type="FunFam" id="3.30.200.20:FF:000463">
    <property type="entry name" value="Serine/threonine-protein kinase AFC2"/>
    <property type="match status" value="1"/>
</dbReference>
<dbReference type="Gene3D" id="3.30.200.20">
    <property type="entry name" value="Phosphorylase Kinase, domain 1"/>
    <property type="match status" value="1"/>
</dbReference>
<dbReference type="Gene3D" id="1.10.510.10">
    <property type="entry name" value="Transferase(Phosphotransferase) domain 1"/>
    <property type="match status" value="1"/>
</dbReference>
<dbReference type="InterPro" id="IPR051175">
    <property type="entry name" value="CLK_kinases"/>
</dbReference>
<dbReference type="InterPro" id="IPR011009">
    <property type="entry name" value="Kinase-like_dom_sf"/>
</dbReference>
<dbReference type="InterPro" id="IPR000719">
    <property type="entry name" value="Prot_kinase_dom"/>
</dbReference>
<dbReference type="InterPro" id="IPR008271">
    <property type="entry name" value="Ser/Thr_kinase_AS"/>
</dbReference>
<dbReference type="PANTHER" id="PTHR45646">
    <property type="entry name" value="SERINE/THREONINE-PROTEIN KINASE DOA-RELATED"/>
    <property type="match status" value="1"/>
</dbReference>
<dbReference type="PANTHER" id="PTHR45646:SF7">
    <property type="entry name" value="SERINE_THREONINE-PROTEIN KINASE AFC2"/>
    <property type="match status" value="1"/>
</dbReference>
<dbReference type="Pfam" id="PF00069">
    <property type="entry name" value="Pkinase"/>
    <property type="match status" value="1"/>
</dbReference>
<dbReference type="SMART" id="SM00220">
    <property type="entry name" value="S_TKc"/>
    <property type="match status" value="1"/>
</dbReference>
<dbReference type="SUPFAM" id="SSF56112">
    <property type="entry name" value="Protein kinase-like (PK-like)"/>
    <property type="match status" value="1"/>
</dbReference>
<dbReference type="PROSITE" id="PS50011">
    <property type="entry name" value="PROTEIN_KINASE_DOM"/>
    <property type="match status" value="1"/>
</dbReference>
<dbReference type="PROSITE" id="PS00108">
    <property type="entry name" value="PROTEIN_KINASE_ST"/>
    <property type="match status" value="1"/>
</dbReference>
<evidence type="ECO:0000255" key="1">
    <source>
        <dbReference type="PROSITE-ProRule" id="PRU00159"/>
    </source>
</evidence>
<evidence type="ECO:0000255" key="2">
    <source>
        <dbReference type="PROSITE-ProRule" id="PRU10027"/>
    </source>
</evidence>
<evidence type="ECO:0000305" key="3"/>
<gene>
    <name type="primary">AFC2</name>
    <name type="ordered locus">At4g24740</name>
    <name type="ORF">F22K18.60</name>
</gene>
<sequence>MEMERVHEFPHTHMDRRPRKRARLGWDVLPQATKAQVGMFCGQEIGNISSFASSGAPSDNSSSLCVKGVARNGSPPWREDDKDGHYIFELGDDLTPRYKIYSKMGEGTFGQVLECWDRERKEMVAVKIVRGVKKYREAAMIEIEMLQQLGKHDKGGNRCVQIRNWFDYRNHICIVFEKLGSSLYDFLRKNNYRSFPIDLVREIGWQLLECVAFMHDLRMIHTDLKPENILLVSSDYVKIPEYKGSRLQRDVCYKRVPKSSAIKVIDFGSTTYERQDQTYIVSTRHYRAPEVILGLGWSYPCDVWSVGCIIVELCTGEALFQTHENLEHLAMMERVLGPFPQQMLKKVDRHSEKYVRRGRLDWPDGATSRDSLKAVLKLPRLQNLIMQHVDHSAGELINMVQGLLRFDPSERITAREALRHPFFARRR</sequence>
<name>AFC2_ARATH</name>
<accession>P51567</accession>
<reference key="1">
    <citation type="journal article" date="1994" name="Proc. Natl. Acad. Sci. U.S.A.">
        <title>AFC1, a LAMMER kinase from Arabidopsis thaliana, activates STE12-dependent processes in yeast.</title>
        <authorList>
            <person name="Bender J."/>
            <person name="Fink G.R."/>
        </authorList>
    </citation>
    <scope>NUCLEOTIDE SEQUENCE [MRNA]</scope>
    <source>
        <strain>cv. Landsberg erecta</strain>
    </source>
</reference>
<reference key="2">
    <citation type="submission" date="1995-02" db="EMBL/GenBank/DDBJ databases">
        <title>A.thaliana genes encoding protein kinases of a new family.</title>
        <authorList>
            <person name="Kuromori T."/>
            <person name="Yamamoto M."/>
        </authorList>
    </citation>
    <scope>NUCLEOTIDE SEQUENCE [MRNA]</scope>
</reference>
<reference key="3">
    <citation type="journal article" date="1999" name="Nature">
        <title>Sequence and analysis of chromosome 4 of the plant Arabidopsis thaliana.</title>
        <authorList>
            <person name="Mayer K.F.X."/>
            <person name="Schueller C."/>
            <person name="Wambutt R."/>
            <person name="Murphy G."/>
            <person name="Volckaert G."/>
            <person name="Pohl T."/>
            <person name="Duesterhoeft A."/>
            <person name="Stiekema W."/>
            <person name="Entian K.-D."/>
            <person name="Terryn N."/>
            <person name="Harris B."/>
            <person name="Ansorge W."/>
            <person name="Brandt P."/>
            <person name="Grivell L.A."/>
            <person name="Rieger M."/>
            <person name="Weichselgartner M."/>
            <person name="de Simone V."/>
            <person name="Obermaier B."/>
            <person name="Mache R."/>
            <person name="Mueller M."/>
            <person name="Kreis M."/>
            <person name="Delseny M."/>
            <person name="Puigdomenech P."/>
            <person name="Watson M."/>
            <person name="Schmidtheini T."/>
            <person name="Reichert B."/>
            <person name="Portetelle D."/>
            <person name="Perez-Alonso M."/>
            <person name="Boutry M."/>
            <person name="Bancroft I."/>
            <person name="Vos P."/>
            <person name="Hoheisel J."/>
            <person name="Zimmermann W."/>
            <person name="Wedler H."/>
            <person name="Ridley P."/>
            <person name="Langham S.-A."/>
            <person name="McCullagh B."/>
            <person name="Bilham L."/>
            <person name="Robben J."/>
            <person name="van der Schueren J."/>
            <person name="Grymonprez B."/>
            <person name="Chuang Y.-J."/>
            <person name="Vandenbussche F."/>
            <person name="Braeken M."/>
            <person name="Weltjens I."/>
            <person name="Voet M."/>
            <person name="Bastiaens I."/>
            <person name="Aert R."/>
            <person name="Defoor E."/>
            <person name="Weitzenegger T."/>
            <person name="Bothe G."/>
            <person name="Ramsperger U."/>
            <person name="Hilbert H."/>
            <person name="Braun M."/>
            <person name="Holzer E."/>
            <person name="Brandt A."/>
            <person name="Peters S."/>
            <person name="van Staveren M."/>
            <person name="Dirkse W."/>
            <person name="Mooijman P."/>
            <person name="Klein Lankhorst R."/>
            <person name="Rose M."/>
            <person name="Hauf J."/>
            <person name="Koetter P."/>
            <person name="Berneiser S."/>
            <person name="Hempel S."/>
            <person name="Feldpausch M."/>
            <person name="Lamberth S."/>
            <person name="Van den Daele H."/>
            <person name="De Keyser A."/>
            <person name="Buysshaert C."/>
            <person name="Gielen J."/>
            <person name="Villarroel R."/>
            <person name="De Clercq R."/>
            <person name="van Montagu M."/>
            <person name="Rogers J."/>
            <person name="Cronin A."/>
            <person name="Quail M.A."/>
            <person name="Bray-Allen S."/>
            <person name="Clark L."/>
            <person name="Doggett J."/>
            <person name="Hall S."/>
            <person name="Kay M."/>
            <person name="Lennard N."/>
            <person name="McLay K."/>
            <person name="Mayes R."/>
            <person name="Pettett A."/>
            <person name="Rajandream M.A."/>
            <person name="Lyne M."/>
            <person name="Benes V."/>
            <person name="Rechmann S."/>
            <person name="Borkova D."/>
            <person name="Bloecker H."/>
            <person name="Scharfe M."/>
            <person name="Grimm M."/>
            <person name="Loehnert T.-H."/>
            <person name="Dose S."/>
            <person name="de Haan M."/>
            <person name="Maarse A.C."/>
            <person name="Schaefer M."/>
            <person name="Mueller-Auer S."/>
            <person name="Gabel C."/>
            <person name="Fuchs M."/>
            <person name="Fartmann B."/>
            <person name="Granderath K."/>
            <person name="Dauner D."/>
            <person name="Herzl A."/>
            <person name="Neumann S."/>
            <person name="Argiriou A."/>
            <person name="Vitale D."/>
            <person name="Liguori R."/>
            <person name="Piravandi E."/>
            <person name="Massenet O."/>
            <person name="Quigley F."/>
            <person name="Clabauld G."/>
            <person name="Muendlein A."/>
            <person name="Felber R."/>
            <person name="Schnabl S."/>
            <person name="Hiller R."/>
            <person name="Schmidt W."/>
            <person name="Lecharny A."/>
            <person name="Aubourg S."/>
            <person name="Chefdor F."/>
            <person name="Cooke R."/>
            <person name="Berger C."/>
            <person name="Monfort A."/>
            <person name="Casacuberta E."/>
            <person name="Gibbons T."/>
            <person name="Weber N."/>
            <person name="Vandenbol M."/>
            <person name="Bargues M."/>
            <person name="Terol J."/>
            <person name="Torres A."/>
            <person name="Perez-Perez A."/>
            <person name="Purnelle B."/>
            <person name="Bent E."/>
            <person name="Johnson S."/>
            <person name="Tacon D."/>
            <person name="Jesse T."/>
            <person name="Heijnen L."/>
            <person name="Schwarz S."/>
            <person name="Scholler P."/>
            <person name="Heber S."/>
            <person name="Francs P."/>
            <person name="Bielke C."/>
            <person name="Frishman D."/>
            <person name="Haase D."/>
            <person name="Lemcke K."/>
            <person name="Mewes H.-W."/>
            <person name="Stocker S."/>
            <person name="Zaccaria P."/>
            <person name="Bevan M."/>
            <person name="Wilson R.K."/>
            <person name="de la Bastide M."/>
            <person name="Habermann K."/>
            <person name="Parnell L."/>
            <person name="Dedhia N."/>
            <person name="Gnoj L."/>
            <person name="Schutz K."/>
            <person name="Huang E."/>
            <person name="Spiegel L."/>
            <person name="Sekhon M."/>
            <person name="Murray J."/>
            <person name="Sheet P."/>
            <person name="Cordes M."/>
            <person name="Abu-Threideh J."/>
            <person name="Stoneking T."/>
            <person name="Kalicki J."/>
            <person name="Graves T."/>
            <person name="Harmon G."/>
            <person name="Edwards J."/>
            <person name="Latreille P."/>
            <person name="Courtney L."/>
            <person name="Cloud J."/>
            <person name="Abbott A."/>
            <person name="Scott K."/>
            <person name="Johnson D."/>
            <person name="Minx P."/>
            <person name="Bentley D."/>
            <person name="Fulton B."/>
            <person name="Miller N."/>
            <person name="Greco T."/>
            <person name="Kemp K."/>
            <person name="Kramer J."/>
            <person name="Fulton L."/>
            <person name="Mardis E."/>
            <person name="Dante M."/>
            <person name="Pepin K."/>
            <person name="Hillier L.W."/>
            <person name="Nelson J."/>
            <person name="Spieth J."/>
            <person name="Ryan E."/>
            <person name="Andrews S."/>
            <person name="Geisel C."/>
            <person name="Layman D."/>
            <person name="Du H."/>
            <person name="Ali J."/>
            <person name="Berghoff A."/>
            <person name="Jones K."/>
            <person name="Drone K."/>
            <person name="Cotton M."/>
            <person name="Joshu C."/>
            <person name="Antonoiu B."/>
            <person name="Zidanic M."/>
            <person name="Strong C."/>
            <person name="Sun H."/>
            <person name="Lamar B."/>
            <person name="Yordan C."/>
            <person name="Ma P."/>
            <person name="Zhong J."/>
            <person name="Preston R."/>
            <person name="Vil D."/>
            <person name="Shekher M."/>
            <person name="Matero A."/>
            <person name="Shah R."/>
            <person name="Swaby I.K."/>
            <person name="O'Shaughnessy A."/>
            <person name="Rodriguez M."/>
            <person name="Hoffman J."/>
            <person name="Till S."/>
            <person name="Granat S."/>
            <person name="Shohdy N."/>
            <person name="Hasegawa A."/>
            <person name="Hameed A."/>
            <person name="Lodhi M."/>
            <person name="Johnson A."/>
            <person name="Chen E."/>
            <person name="Marra M.A."/>
            <person name="Martienssen R."/>
            <person name="McCombie W.R."/>
        </authorList>
    </citation>
    <scope>NUCLEOTIDE SEQUENCE [LARGE SCALE GENOMIC DNA]</scope>
    <source>
        <strain>cv. Columbia</strain>
    </source>
</reference>
<reference key="4">
    <citation type="journal article" date="2017" name="Plant J.">
        <title>Araport11: a complete reannotation of the Arabidopsis thaliana reference genome.</title>
        <authorList>
            <person name="Cheng C.Y."/>
            <person name="Krishnakumar V."/>
            <person name="Chan A.P."/>
            <person name="Thibaud-Nissen F."/>
            <person name="Schobel S."/>
            <person name="Town C.D."/>
        </authorList>
    </citation>
    <scope>GENOME REANNOTATION</scope>
    <source>
        <strain>cv. Columbia</strain>
    </source>
</reference>
<comment type="catalytic activity">
    <reaction>
        <text>L-seryl-[protein] + ATP = O-phospho-L-seryl-[protein] + ADP + H(+)</text>
        <dbReference type="Rhea" id="RHEA:17989"/>
        <dbReference type="Rhea" id="RHEA-COMP:9863"/>
        <dbReference type="Rhea" id="RHEA-COMP:11604"/>
        <dbReference type="ChEBI" id="CHEBI:15378"/>
        <dbReference type="ChEBI" id="CHEBI:29999"/>
        <dbReference type="ChEBI" id="CHEBI:30616"/>
        <dbReference type="ChEBI" id="CHEBI:83421"/>
        <dbReference type="ChEBI" id="CHEBI:456216"/>
        <dbReference type="EC" id="2.7.12.1"/>
    </reaction>
</comment>
<comment type="catalytic activity">
    <reaction>
        <text>L-threonyl-[protein] + ATP = O-phospho-L-threonyl-[protein] + ADP + H(+)</text>
        <dbReference type="Rhea" id="RHEA:46608"/>
        <dbReference type="Rhea" id="RHEA-COMP:11060"/>
        <dbReference type="Rhea" id="RHEA-COMP:11605"/>
        <dbReference type="ChEBI" id="CHEBI:15378"/>
        <dbReference type="ChEBI" id="CHEBI:30013"/>
        <dbReference type="ChEBI" id="CHEBI:30616"/>
        <dbReference type="ChEBI" id="CHEBI:61977"/>
        <dbReference type="ChEBI" id="CHEBI:456216"/>
        <dbReference type="EC" id="2.7.12.1"/>
    </reaction>
</comment>
<comment type="catalytic activity">
    <reaction>
        <text>L-tyrosyl-[protein] + ATP = O-phospho-L-tyrosyl-[protein] + ADP + H(+)</text>
        <dbReference type="Rhea" id="RHEA:10596"/>
        <dbReference type="Rhea" id="RHEA-COMP:10136"/>
        <dbReference type="Rhea" id="RHEA-COMP:20101"/>
        <dbReference type="ChEBI" id="CHEBI:15378"/>
        <dbReference type="ChEBI" id="CHEBI:30616"/>
        <dbReference type="ChEBI" id="CHEBI:46858"/>
        <dbReference type="ChEBI" id="CHEBI:61978"/>
        <dbReference type="ChEBI" id="CHEBI:456216"/>
        <dbReference type="EC" id="2.7.12.1"/>
    </reaction>
</comment>
<comment type="interaction">
    <interactant intactId="EBI-1792180">
        <id>P51567</id>
    </interactant>
    <interactant intactId="EBI-927103">
        <id>Q9SEU4</id>
        <label>SCL33</label>
    </interactant>
    <organismsDiffer>false</organismsDiffer>
    <experiments>2</experiments>
</comment>
<comment type="alternative products">
    <event type="alternative splicing"/>
    <isoform>
        <id>P51567-1</id>
        <name>1</name>
        <sequence type="displayed"/>
    </isoform>
    <text>A number of isoforms are produced. According to EST sequences.</text>
</comment>
<comment type="similarity">
    <text evidence="3">Belongs to the protein kinase superfamily. CMGC Ser/Thr protein kinase family. Lammer subfamily.</text>
</comment>
<protein>
    <recommendedName>
        <fullName>Serine/threonine-protein kinase AFC2</fullName>
        <ecNumber>2.7.12.1</ecNumber>
    </recommendedName>
</protein>
<organism>
    <name type="scientific">Arabidopsis thaliana</name>
    <name type="common">Mouse-ear cress</name>
    <dbReference type="NCBI Taxonomy" id="3702"/>
    <lineage>
        <taxon>Eukaryota</taxon>
        <taxon>Viridiplantae</taxon>
        <taxon>Streptophyta</taxon>
        <taxon>Embryophyta</taxon>
        <taxon>Tracheophyta</taxon>
        <taxon>Spermatophyta</taxon>
        <taxon>Magnoliopsida</taxon>
        <taxon>eudicotyledons</taxon>
        <taxon>Gunneridae</taxon>
        <taxon>Pentapetalae</taxon>
        <taxon>rosids</taxon>
        <taxon>malvids</taxon>
        <taxon>Brassicales</taxon>
        <taxon>Brassicaceae</taxon>
        <taxon>Camelineae</taxon>
        <taxon>Arabidopsis</taxon>
    </lineage>
</organism>